<sequence length="143" mass="16092">MITPTVKMRILSSSHLFYLALCLLTFTSSATAGPETLCGAELVDALQFVCGDRGFYFNKPTGYGSSSRRAPQTGIVDECCFRSCDLRRLEMYCAPLKPAKAARSVRAQRHTDMPKTQKYQPPSTNKKMKSQRRRKGSTFEEHK</sequence>
<gene>
    <name evidence="2" type="primary">IGF1</name>
    <name evidence="2" type="synonym">IGF-1</name>
</gene>
<keyword id="KW-0025">Alternative splicing</keyword>
<keyword id="KW-1015">Disulfide bond</keyword>
<keyword id="KW-0339">Growth factor</keyword>
<keyword id="KW-1185">Reference proteome</keyword>
<keyword id="KW-0964">Secreted</keyword>
<keyword id="KW-0732">Signal</keyword>
<reference key="1">
    <citation type="submission" date="1996-11" db="EMBL/GenBank/DDBJ databases">
        <authorList>
            <person name="Flekna G."/>
            <person name="Brem G."/>
            <person name="Mueller M."/>
        </authorList>
    </citation>
    <scope>NUCLEOTIDE SEQUENCE [MRNA] (ISOFORM IGF-IA)</scope>
    <source>
        <strain>Zika</strain>
    </source>
</reference>
<reference key="2">
    <citation type="submission" date="1997-09" db="EMBL/GenBank/DDBJ databases">
        <authorList>
            <person name="Flekna G."/>
            <person name="Brem G."/>
            <person name="Mueller M."/>
        </authorList>
    </citation>
    <scope>NUCLEOTIDE SEQUENCE [MRNA] (ISOFORM IGF-IB)</scope>
    <source>
        <strain>Zika</strain>
        <tissue>Liver</tissue>
    </source>
</reference>
<evidence type="ECO:0000250" key="1">
    <source>
        <dbReference type="UniProtKB" id="P05017"/>
    </source>
</evidence>
<evidence type="ECO:0000250" key="2">
    <source>
        <dbReference type="UniProtKB" id="P05019"/>
    </source>
</evidence>
<evidence type="ECO:0000250" key="3">
    <source>
        <dbReference type="UniProtKB" id="P08025"/>
    </source>
</evidence>
<evidence type="ECO:0000255" key="4"/>
<evidence type="ECO:0000256" key="5">
    <source>
        <dbReference type="SAM" id="MobiDB-lite"/>
    </source>
</evidence>
<evidence type="ECO:0000303" key="6">
    <source ref="1"/>
</evidence>
<evidence type="ECO:0000305" key="7"/>
<accession>Q95222</accession>
<accession>O18846</accession>
<name>IGF1_RABIT</name>
<dbReference type="EMBL" id="U75390">
    <property type="protein sequence ID" value="AAB48032.1"/>
    <property type="molecule type" value="mRNA"/>
</dbReference>
<dbReference type="EMBL" id="AF022961">
    <property type="protein sequence ID" value="AAB80950.1"/>
    <property type="molecule type" value="mRNA"/>
</dbReference>
<dbReference type="RefSeq" id="NP_001075495.1">
    <molecule id="Q95222-1"/>
    <property type="nucleotide sequence ID" value="NM_001082026.1"/>
</dbReference>
<dbReference type="RefSeq" id="XP_008254942.1">
    <molecule id="Q95222-2"/>
    <property type="nucleotide sequence ID" value="XM_008256720.4"/>
</dbReference>
<dbReference type="SMR" id="Q95222"/>
<dbReference type="STRING" id="9986.ENSOCUP00000021389"/>
<dbReference type="PaxDb" id="9986-ENSOCUP00000021389"/>
<dbReference type="GeneID" id="100008668"/>
<dbReference type="KEGG" id="ocu:100008668"/>
<dbReference type="CTD" id="3479"/>
<dbReference type="eggNOG" id="ENOG502RCAB">
    <property type="taxonomic scope" value="Eukaryota"/>
</dbReference>
<dbReference type="InParanoid" id="Q95222"/>
<dbReference type="OrthoDB" id="8936076at2759"/>
<dbReference type="Proteomes" id="UP000001811">
    <property type="component" value="Unplaced"/>
</dbReference>
<dbReference type="GO" id="GO:0035867">
    <property type="term" value="C:alphav-beta3 integrin-IGF-1-IGF1R complex"/>
    <property type="evidence" value="ECO:0000250"/>
    <property type="project" value="UniProtKB"/>
</dbReference>
<dbReference type="GO" id="GO:0070382">
    <property type="term" value="C:exocytic vesicle"/>
    <property type="evidence" value="ECO:0000250"/>
    <property type="project" value="UniProtKB"/>
</dbReference>
<dbReference type="GO" id="GO:0005615">
    <property type="term" value="C:extracellular space"/>
    <property type="evidence" value="ECO:0007669"/>
    <property type="project" value="InterPro"/>
</dbReference>
<dbReference type="GO" id="GO:0008083">
    <property type="term" value="F:growth factor activity"/>
    <property type="evidence" value="ECO:0007669"/>
    <property type="project" value="UniProtKB-KW"/>
</dbReference>
<dbReference type="GO" id="GO:0005179">
    <property type="term" value="F:hormone activity"/>
    <property type="evidence" value="ECO:0007669"/>
    <property type="project" value="InterPro"/>
</dbReference>
<dbReference type="GO" id="GO:0005159">
    <property type="term" value="F:insulin-like growth factor receptor binding"/>
    <property type="evidence" value="ECO:0000250"/>
    <property type="project" value="UniProtKB"/>
</dbReference>
<dbReference type="GO" id="GO:0008283">
    <property type="term" value="P:cell population proliferation"/>
    <property type="evidence" value="ECO:0007669"/>
    <property type="project" value="TreeGrafter"/>
</dbReference>
<dbReference type="GO" id="GO:0048009">
    <property type="term" value="P:insulin-like growth factor receptor signaling pathway"/>
    <property type="evidence" value="ECO:0000250"/>
    <property type="project" value="UniProtKB"/>
</dbReference>
<dbReference type="GO" id="GO:0043066">
    <property type="term" value="P:negative regulation of apoptotic process"/>
    <property type="evidence" value="ECO:0000250"/>
    <property type="project" value="UniProtKB"/>
</dbReference>
<dbReference type="GO" id="GO:0090201">
    <property type="term" value="P:negative regulation of release of cytochrome c from mitochondria"/>
    <property type="evidence" value="ECO:0000250"/>
    <property type="project" value="UniProtKB"/>
</dbReference>
<dbReference type="GO" id="GO:0034392">
    <property type="term" value="P:negative regulation of smooth muscle cell apoptotic process"/>
    <property type="evidence" value="ECO:0000250"/>
    <property type="project" value="UniProtKB"/>
</dbReference>
<dbReference type="GO" id="GO:0008284">
    <property type="term" value="P:positive regulation of cell population proliferation"/>
    <property type="evidence" value="ECO:0000250"/>
    <property type="project" value="UniProtKB"/>
</dbReference>
<dbReference type="GO" id="GO:0046326">
    <property type="term" value="P:positive regulation of D-glucose import"/>
    <property type="evidence" value="ECO:0000250"/>
    <property type="project" value="UniProtKB"/>
</dbReference>
<dbReference type="GO" id="GO:0045725">
    <property type="term" value="P:positive regulation of glycogen biosynthetic process"/>
    <property type="evidence" value="ECO:0000250"/>
    <property type="project" value="UniProtKB"/>
</dbReference>
<dbReference type="GO" id="GO:0043410">
    <property type="term" value="P:positive regulation of MAPK cascade"/>
    <property type="evidence" value="ECO:0000250"/>
    <property type="project" value="UniProtKB"/>
</dbReference>
<dbReference type="GO" id="GO:0051897">
    <property type="term" value="P:positive regulation of phosphatidylinositol 3-kinase/protein kinase B signal transduction"/>
    <property type="evidence" value="ECO:0007669"/>
    <property type="project" value="TreeGrafter"/>
</dbReference>
<dbReference type="CDD" id="cd04368">
    <property type="entry name" value="IlGF"/>
    <property type="match status" value="1"/>
</dbReference>
<dbReference type="FunFam" id="1.10.100.10:FF:000001">
    <property type="entry name" value="insulin-like growth factor I isoform X1"/>
    <property type="match status" value="1"/>
</dbReference>
<dbReference type="Gene3D" id="1.10.100.10">
    <property type="entry name" value="Insulin-like"/>
    <property type="match status" value="1"/>
</dbReference>
<dbReference type="InterPro" id="IPR022341">
    <property type="entry name" value="IGF-I"/>
</dbReference>
<dbReference type="InterPro" id="IPR016179">
    <property type="entry name" value="Insulin-like"/>
</dbReference>
<dbReference type="InterPro" id="IPR022350">
    <property type="entry name" value="Insulin-like_growth_factor"/>
</dbReference>
<dbReference type="InterPro" id="IPR036438">
    <property type="entry name" value="Insulin-like_sf"/>
</dbReference>
<dbReference type="InterPro" id="IPR022353">
    <property type="entry name" value="Insulin_CS"/>
</dbReference>
<dbReference type="InterPro" id="IPR022352">
    <property type="entry name" value="Insulin_family"/>
</dbReference>
<dbReference type="PANTHER" id="PTHR46845">
    <property type="entry name" value="INSULIN-LIKE GROWTH FACTOR I"/>
    <property type="match status" value="1"/>
</dbReference>
<dbReference type="PANTHER" id="PTHR46845:SF1">
    <property type="entry name" value="INSULIN-LIKE GROWTH FACTOR I"/>
    <property type="match status" value="1"/>
</dbReference>
<dbReference type="Pfam" id="PF00049">
    <property type="entry name" value="Insulin"/>
    <property type="match status" value="1"/>
</dbReference>
<dbReference type="PRINTS" id="PR02002">
    <property type="entry name" value="INSLNLIKEGF"/>
</dbReference>
<dbReference type="PRINTS" id="PR02005">
    <property type="entry name" value="INSLNLIKEGF1"/>
</dbReference>
<dbReference type="PRINTS" id="PR00276">
    <property type="entry name" value="INSULINFAMLY"/>
</dbReference>
<dbReference type="SMART" id="SM00078">
    <property type="entry name" value="IlGF"/>
    <property type="match status" value="1"/>
</dbReference>
<dbReference type="SUPFAM" id="SSF56994">
    <property type="entry name" value="Insulin-like"/>
    <property type="match status" value="1"/>
</dbReference>
<dbReference type="PROSITE" id="PS00262">
    <property type="entry name" value="INSULIN"/>
    <property type="match status" value="1"/>
</dbReference>
<protein>
    <recommendedName>
        <fullName evidence="2">Insulin-like growth factor 1</fullName>
    </recommendedName>
    <alternativeName>
        <fullName evidence="2">Insulin-like growth factor I</fullName>
        <shortName evidence="2">IGF-I</shortName>
    </alternativeName>
    <alternativeName>
        <fullName>Somatomedin</fullName>
    </alternativeName>
</protein>
<feature type="signal peptide" evidence="4">
    <location>
        <begin position="1"/>
        <end position="32"/>
    </location>
</feature>
<feature type="chain" id="PRO_0000015679" description="Insulin-like growth factor 1">
    <location>
        <begin position="33"/>
        <end position="102"/>
    </location>
</feature>
<feature type="propeptide" id="PRO_0000015680" description="E peptide">
    <location>
        <begin position="103"/>
        <end position="143"/>
    </location>
</feature>
<feature type="region of interest" description="B">
    <location>
        <begin position="33"/>
        <end position="61"/>
    </location>
</feature>
<feature type="region of interest" description="C">
    <location>
        <begin position="62"/>
        <end position="73"/>
    </location>
</feature>
<feature type="region of interest" description="A">
    <location>
        <begin position="74"/>
        <end position="94"/>
    </location>
</feature>
<feature type="region of interest" description="D">
    <location>
        <begin position="95"/>
        <end position="102"/>
    </location>
</feature>
<feature type="region of interest" description="Disordered" evidence="5">
    <location>
        <begin position="99"/>
        <end position="143"/>
    </location>
</feature>
<feature type="compositionally biased region" description="Basic residues" evidence="5">
    <location>
        <begin position="126"/>
        <end position="136"/>
    </location>
</feature>
<feature type="disulfide bond" evidence="2">
    <location>
        <begin position="38"/>
        <end position="80"/>
    </location>
</feature>
<feature type="disulfide bond" evidence="2">
    <location>
        <begin position="50"/>
        <end position="93"/>
    </location>
</feature>
<feature type="disulfide bond" evidence="2">
    <location>
        <begin position="79"/>
        <end position="84"/>
    </location>
</feature>
<feature type="splice variant" id="VSP_002705" description="In isoform IGF-IA." evidence="6">
    <original>YQPPSTNKKMKSQRRRKGSTFEEHK</original>
    <variation>EVHLKNTSRGSAGNKNYRM</variation>
    <location>
        <begin position="119"/>
        <end position="143"/>
    </location>
</feature>
<proteinExistence type="evidence at transcript level"/>
<organism>
    <name type="scientific">Oryctolagus cuniculus</name>
    <name type="common">Rabbit</name>
    <dbReference type="NCBI Taxonomy" id="9986"/>
    <lineage>
        <taxon>Eukaryota</taxon>
        <taxon>Metazoa</taxon>
        <taxon>Chordata</taxon>
        <taxon>Craniata</taxon>
        <taxon>Vertebrata</taxon>
        <taxon>Euteleostomi</taxon>
        <taxon>Mammalia</taxon>
        <taxon>Eutheria</taxon>
        <taxon>Euarchontoglires</taxon>
        <taxon>Glires</taxon>
        <taxon>Lagomorpha</taxon>
        <taxon>Leporidae</taxon>
        <taxon>Oryctolagus</taxon>
    </lineage>
</organism>
<comment type="function">
    <text evidence="1 2 3">The insulin-like growth factors, isolated from plasma, are structurally and functionally related to insulin but have a much higher growth-promoting activity. May be a physiological regulator of [1-14C]-2-deoxy-D-glucose (2DG) transport and glycogen synthesis in osteoblasts. Stimulates glucose transport in bone-derived osteoblastic (PyMS) cells and is effective at much lower concentrations than insulin, not only regarding glycogen and DNA synthesis but also with regard to enhancing glucose uptake. May play a role in synapse maturation. Ca(2+)-dependent exocytosis of IGF1 is required for sensory perception of smell in the olfactory bulb. Acts as a ligand for IGF1R. Binds to the alpha subunit of IGF1R, leading to the activation of the intrinsic tyrosine kinase activity which autophosphorylates tyrosine residues in the beta subunit thus initiating a cascade of down-stream signaling events leading to activation of the PI3K-AKT/PKB and the Ras-MAPK pathways. Binds to integrins ITGAV:ITGB3 and ITGA6:ITGB4. Its binding to integrins and subsequent ternary complex formation with integrins and IGFR1 are essential for IGF1 signaling. Induces the phosphorylation and activation of IGFR1, MAPK3/ERK1, MAPK1/ERK2 and AKT1 (By similarity). As part of the MAPK/ERK signaling pathway, acts as a negative regulator of apoptosis in cardiomyocytes via promotion of STUB1/CHIP-mediated ubiquitination and degradation of ICER-type isoforms of CREM (By similarity).</text>
</comment>
<comment type="subunit">
    <text evidence="2">Forms a ternary complex with IGFR1 and ITGAV:ITGB3. Forms a ternary complex with IGFR1 and ITGA6:ITGB4. Forms a ternary complex with IGFBP3 and ALS.</text>
</comment>
<comment type="subcellular location">
    <subcellularLocation>
        <location evidence="1">Secreted</location>
    </subcellularLocation>
</comment>
<comment type="alternative products">
    <event type="alternative splicing"/>
    <isoform>
        <id>Q95222-1</id>
        <name>IGF-IB</name>
        <sequence type="displayed"/>
    </isoform>
    <isoform>
        <id>Q95222-2</id>
        <name>IGF-IA</name>
        <sequence type="described" ref="VSP_002705"/>
    </isoform>
</comment>
<comment type="similarity">
    <text evidence="7">Belongs to the insulin family.</text>
</comment>